<feature type="chain" id="PRO_0000342133" description="Nucleoside triphosphatase NudI">
    <location>
        <begin position="1"/>
        <end position="141"/>
    </location>
</feature>
<feature type="domain" description="Nudix hydrolase" evidence="1">
    <location>
        <begin position="1"/>
        <end position="141"/>
    </location>
</feature>
<feature type="short sequence motif" description="Nudix box">
    <location>
        <begin position="38"/>
        <end position="59"/>
    </location>
</feature>
<name>NUDI_ECOHS</name>
<gene>
    <name evidence="1" type="primary">nudI</name>
    <name type="ordered locus">EcHS_A2396</name>
</gene>
<organism>
    <name type="scientific">Escherichia coli O9:H4 (strain HS)</name>
    <dbReference type="NCBI Taxonomy" id="331112"/>
    <lineage>
        <taxon>Bacteria</taxon>
        <taxon>Pseudomonadati</taxon>
        <taxon>Pseudomonadota</taxon>
        <taxon>Gammaproteobacteria</taxon>
        <taxon>Enterobacterales</taxon>
        <taxon>Enterobacteriaceae</taxon>
        <taxon>Escherichia</taxon>
    </lineage>
</organism>
<keyword id="KW-0378">Hydrolase</keyword>
<keyword id="KW-0460">Magnesium</keyword>
<reference key="1">
    <citation type="journal article" date="2008" name="J. Bacteriol.">
        <title>The pangenome structure of Escherichia coli: comparative genomic analysis of E. coli commensal and pathogenic isolates.</title>
        <authorList>
            <person name="Rasko D.A."/>
            <person name="Rosovitz M.J."/>
            <person name="Myers G.S.A."/>
            <person name="Mongodin E.F."/>
            <person name="Fricke W.F."/>
            <person name="Gajer P."/>
            <person name="Crabtree J."/>
            <person name="Sebaihia M."/>
            <person name="Thomson N.R."/>
            <person name="Chaudhuri R."/>
            <person name="Henderson I.R."/>
            <person name="Sperandio V."/>
            <person name="Ravel J."/>
        </authorList>
    </citation>
    <scope>NUCLEOTIDE SEQUENCE [LARGE SCALE GENOMIC DNA]</scope>
    <source>
        <strain>HS</strain>
    </source>
</reference>
<comment type="function">
    <text evidence="1">Catalyzes the hydrolysis of nucleoside triphosphates, with a preference for pyrimidine deoxynucleoside triphosphates (dUTP, dTTP and dCTP).</text>
</comment>
<comment type="catalytic activity">
    <reaction evidence="1">
        <text>a ribonucleoside 5'-triphosphate + H2O = a ribonucleoside 5'-phosphate + diphosphate + H(+)</text>
        <dbReference type="Rhea" id="RHEA:23996"/>
        <dbReference type="ChEBI" id="CHEBI:15377"/>
        <dbReference type="ChEBI" id="CHEBI:15378"/>
        <dbReference type="ChEBI" id="CHEBI:33019"/>
        <dbReference type="ChEBI" id="CHEBI:58043"/>
        <dbReference type="ChEBI" id="CHEBI:61557"/>
        <dbReference type="EC" id="3.6.1.9"/>
    </reaction>
</comment>
<comment type="catalytic activity">
    <reaction evidence="1">
        <text>a 2'-deoxyribonucleoside 5'-triphosphate + H2O = a 2'-deoxyribonucleoside 5'-phosphate + diphosphate + H(+)</text>
        <dbReference type="Rhea" id="RHEA:44644"/>
        <dbReference type="ChEBI" id="CHEBI:15377"/>
        <dbReference type="ChEBI" id="CHEBI:15378"/>
        <dbReference type="ChEBI" id="CHEBI:33019"/>
        <dbReference type="ChEBI" id="CHEBI:61560"/>
        <dbReference type="ChEBI" id="CHEBI:65317"/>
        <dbReference type="EC" id="3.6.1.9"/>
    </reaction>
</comment>
<comment type="catalytic activity">
    <reaction evidence="1">
        <text>dUTP + H2O = dUMP + diphosphate + H(+)</text>
        <dbReference type="Rhea" id="RHEA:10248"/>
        <dbReference type="ChEBI" id="CHEBI:15377"/>
        <dbReference type="ChEBI" id="CHEBI:15378"/>
        <dbReference type="ChEBI" id="CHEBI:33019"/>
        <dbReference type="ChEBI" id="CHEBI:61555"/>
        <dbReference type="ChEBI" id="CHEBI:246422"/>
        <dbReference type="EC" id="3.6.1.9"/>
    </reaction>
</comment>
<comment type="catalytic activity">
    <reaction evidence="1">
        <text>dUTP + H2O = dUMP + diphosphate + H(+)</text>
        <dbReference type="Rhea" id="RHEA:10248"/>
        <dbReference type="ChEBI" id="CHEBI:15377"/>
        <dbReference type="ChEBI" id="CHEBI:15378"/>
        <dbReference type="ChEBI" id="CHEBI:33019"/>
        <dbReference type="ChEBI" id="CHEBI:61555"/>
        <dbReference type="ChEBI" id="CHEBI:246422"/>
        <dbReference type="EC" id="3.6.1.23"/>
    </reaction>
</comment>
<comment type="catalytic activity">
    <reaction evidence="1">
        <text>dTTP + H2O = dTMP + diphosphate + H(+)</text>
        <dbReference type="Rhea" id="RHEA:28534"/>
        <dbReference type="ChEBI" id="CHEBI:15377"/>
        <dbReference type="ChEBI" id="CHEBI:15378"/>
        <dbReference type="ChEBI" id="CHEBI:33019"/>
        <dbReference type="ChEBI" id="CHEBI:37568"/>
        <dbReference type="ChEBI" id="CHEBI:63528"/>
        <dbReference type="EC" id="3.6.1.9"/>
    </reaction>
</comment>
<comment type="catalytic activity">
    <reaction evidence="1">
        <text>dCTP + H2O = dCMP + diphosphate + H(+)</text>
        <dbReference type="Rhea" id="RHEA:22636"/>
        <dbReference type="ChEBI" id="CHEBI:15377"/>
        <dbReference type="ChEBI" id="CHEBI:15378"/>
        <dbReference type="ChEBI" id="CHEBI:33019"/>
        <dbReference type="ChEBI" id="CHEBI:57566"/>
        <dbReference type="ChEBI" id="CHEBI:61481"/>
        <dbReference type="EC" id="3.6.1.9"/>
    </reaction>
</comment>
<comment type="catalytic activity">
    <reaction evidence="1">
        <text>dCTP + H2O = dCMP + diphosphate + H(+)</text>
        <dbReference type="Rhea" id="RHEA:22636"/>
        <dbReference type="ChEBI" id="CHEBI:15377"/>
        <dbReference type="ChEBI" id="CHEBI:15378"/>
        <dbReference type="ChEBI" id="CHEBI:33019"/>
        <dbReference type="ChEBI" id="CHEBI:57566"/>
        <dbReference type="ChEBI" id="CHEBI:61481"/>
        <dbReference type="EC" id="3.6.1.12"/>
    </reaction>
</comment>
<comment type="cofactor">
    <cofactor evidence="1">
        <name>Mg(2+)</name>
        <dbReference type="ChEBI" id="CHEBI:18420"/>
    </cofactor>
</comment>
<comment type="subunit">
    <text evidence="1">Monomer.</text>
</comment>
<comment type="similarity">
    <text evidence="1">Belongs to the Nudix hydrolase family. NudI subfamily.</text>
</comment>
<protein>
    <recommendedName>
        <fullName evidence="1">Nucleoside triphosphatase NudI</fullName>
        <ecNumber evidence="1">3.6.1.9</ecNumber>
    </recommendedName>
    <alternativeName>
        <fullName evidence="1">Nucleotide diphosphatase NudI</fullName>
    </alternativeName>
    <alternativeName>
        <fullName evidence="1">Pyrimidine deoxynucleoside triphosphate diphosphatase</fullName>
    </alternativeName>
    <alternativeName>
        <fullName evidence="1">dCTP diphosphatase</fullName>
        <ecNumber evidence="1">3.6.1.12</ecNumber>
    </alternativeName>
    <alternativeName>
        <fullName evidence="1">dTTP diphosphatase</fullName>
        <ecNumber evidence="1">3.6.1.-</ecNumber>
    </alternativeName>
    <alternativeName>
        <fullName evidence="1">dUTP diphosphatase</fullName>
        <ecNumber evidence="1">3.6.1.23</ecNumber>
    </alternativeName>
</protein>
<evidence type="ECO:0000255" key="1">
    <source>
        <dbReference type="HAMAP-Rule" id="MF_01846"/>
    </source>
</evidence>
<sequence>MRQRTIVCPLIQNDGAYLLCKMADDRGVFPGQWALSGGGVEPGERIEEALRREIREELGEQLLLTEITPWTFSDDIRTKTYADGRKEEIYMIYLIFDCVSANREVKINEEFQDYAWVKPEDLVHYDLNVATRKTLRLKGLL</sequence>
<dbReference type="EC" id="3.6.1.9" evidence="1"/>
<dbReference type="EC" id="3.6.1.12" evidence="1"/>
<dbReference type="EC" id="3.6.1.-" evidence="1"/>
<dbReference type="EC" id="3.6.1.23" evidence="1"/>
<dbReference type="EMBL" id="CP000802">
    <property type="protein sequence ID" value="ABV06672.1"/>
    <property type="molecule type" value="Genomic_DNA"/>
</dbReference>
<dbReference type="RefSeq" id="WP_001249884.1">
    <property type="nucleotide sequence ID" value="NC_009800.1"/>
</dbReference>
<dbReference type="SMR" id="A8A2B8"/>
<dbReference type="GeneID" id="75172382"/>
<dbReference type="KEGG" id="ecx:EcHS_A2396"/>
<dbReference type="HOGENOM" id="CLU_037162_31_0_6"/>
<dbReference type="GO" id="GO:0047840">
    <property type="term" value="F:dCTP diphosphatase activity"/>
    <property type="evidence" value="ECO:0007669"/>
    <property type="project" value="UniProtKB-EC"/>
</dbReference>
<dbReference type="GO" id="GO:0036218">
    <property type="term" value="F:dTTP diphosphatase activity"/>
    <property type="evidence" value="ECO:0007669"/>
    <property type="project" value="RHEA"/>
</dbReference>
<dbReference type="GO" id="GO:0004170">
    <property type="term" value="F:dUTP diphosphatase activity"/>
    <property type="evidence" value="ECO:0007669"/>
    <property type="project" value="UniProtKB-EC"/>
</dbReference>
<dbReference type="GO" id="GO:0000287">
    <property type="term" value="F:magnesium ion binding"/>
    <property type="evidence" value="ECO:0007669"/>
    <property type="project" value="UniProtKB-UniRule"/>
</dbReference>
<dbReference type="FunFam" id="3.90.79.10:FF:000039">
    <property type="entry name" value="Nucleoside triphosphatase NudI"/>
    <property type="match status" value="1"/>
</dbReference>
<dbReference type="Gene3D" id="3.90.79.10">
    <property type="entry name" value="Nucleoside Triphosphate Pyrophosphohydrolase"/>
    <property type="match status" value="1"/>
</dbReference>
<dbReference type="HAMAP" id="MF_01846">
    <property type="entry name" value="Nudix_NudI"/>
    <property type="match status" value="1"/>
</dbReference>
<dbReference type="InterPro" id="IPR023781">
    <property type="entry name" value="Nucleoside_triphosphatase_NudI"/>
</dbReference>
<dbReference type="InterPro" id="IPR020476">
    <property type="entry name" value="Nudix_hydrolase"/>
</dbReference>
<dbReference type="InterPro" id="IPR015797">
    <property type="entry name" value="NUDIX_hydrolase-like_dom_sf"/>
</dbReference>
<dbReference type="InterPro" id="IPR020084">
    <property type="entry name" value="NUDIX_hydrolase_CS"/>
</dbReference>
<dbReference type="InterPro" id="IPR000086">
    <property type="entry name" value="NUDIX_hydrolase_dom"/>
</dbReference>
<dbReference type="NCBIfam" id="NF012016">
    <property type="entry name" value="PRK15472.1"/>
    <property type="match status" value="1"/>
</dbReference>
<dbReference type="PANTHER" id="PTHR43046">
    <property type="entry name" value="GDP-MANNOSE MANNOSYL HYDROLASE"/>
    <property type="match status" value="1"/>
</dbReference>
<dbReference type="PANTHER" id="PTHR43046:SF14">
    <property type="entry name" value="MUTT_NUDIX FAMILY PROTEIN"/>
    <property type="match status" value="1"/>
</dbReference>
<dbReference type="Pfam" id="PF00293">
    <property type="entry name" value="NUDIX"/>
    <property type="match status" value="1"/>
</dbReference>
<dbReference type="PRINTS" id="PR00502">
    <property type="entry name" value="NUDIXFAMILY"/>
</dbReference>
<dbReference type="SUPFAM" id="SSF55811">
    <property type="entry name" value="Nudix"/>
    <property type="match status" value="1"/>
</dbReference>
<dbReference type="PROSITE" id="PS51462">
    <property type="entry name" value="NUDIX"/>
    <property type="match status" value="1"/>
</dbReference>
<dbReference type="PROSITE" id="PS00893">
    <property type="entry name" value="NUDIX_BOX"/>
    <property type="match status" value="1"/>
</dbReference>
<proteinExistence type="inferred from homology"/>
<accession>A8A2B8</accession>